<dbReference type="EC" id="1.1.1.18" evidence="1"/>
<dbReference type="EMBL" id="CP001341">
    <property type="protein sequence ID" value="ACL38937.1"/>
    <property type="molecule type" value="Genomic_DNA"/>
</dbReference>
<dbReference type="RefSeq" id="WP_015936160.1">
    <property type="nucleotide sequence ID" value="NC_011886.1"/>
</dbReference>
<dbReference type="SMR" id="B8HDD2"/>
<dbReference type="STRING" id="452863.Achl_0942"/>
<dbReference type="KEGG" id="ach:Achl_0942"/>
<dbReference type="eggNOG" id="COG0673">
    <property type="taxonomic scope" value="Bacteria"/>
</dbReference>
<dbReference type="HOGENOM" id="CLU_023194_0_1_11"/>
<dbReference type="OrthoDB" id="256869at2"/>
<dbReference type="Proteomes" id="UP000002505">
    <property type="component" value="Chromosome"/>
</dbReference>
<dbReference type="GO" id="GO:0050112">
    <property type="term" value="F:inositol 2-dehydrogenase (NAD+) activity"/>
    <property type="evidence" value="ECO:0007669"/>
    <property type="project" value="UniProtKB-UniRule"/>
</dbReference>
<dbReference type="GO" id="GO:0000166">
    <property type="term" value="F:nucleotide binding"/>
    <property type="evidence" value="ECO:0007669"/>
    <property type="project" value="InterPro"/>
</dbReference>
<dbReference type="GO" id="GO:0019310">
    <property type="term" value="P:inositol catabolic process"/>
    <property type="evidence" value="ECO:0007669"/>
    <property type="project" value="UniProtKB-UniRule"/>
</dbReference>
<dbReference type="Gene3D" id="3.30.360.10">
    <property type="entry name" value="Dihydrodipicolinate Reductase, domain 2"/>
    <property type="match status" value="1"/>
</dbReference>
<dbReference type="Gene3D" id="3.40.50.720">
    <property type="entry name" value="NAD(P)-binding Rossmann-like Domain"/>
    <property type="match status" value="1"/>
</dbReference>
<dbReference type="HAMAP" id="MF_01671">
    <property type="entry name" value="IolG"/>
    <property type="match status" value="1"/>
</dbReference>
<dbReference type="InterPro" id="IPR050424">
    <property type="entry name" value="Gfo-Idh-MocA_inositol_DH"/>
</dbReference>
<dbReference type="InterPro" id="IPR004104">
    <property type="entry name" value="Gfo/Idh/MocA-like_OxRdtase_C"/>
</dbReference>
<dbReference type="InterPro" id="IPR000683">
    <property type="entry name" value="Gfo/Idh/MocA-like_OxRdtase_N"/>
</dbReference>
<dbReference type="InterPro" id="IPR023794">
    <property type="entry name" value="MI/DCI_dehydrogenase"/>
</dbReference>
<dbReference type="InterPro" id="IPR036291">
    <property type="entry name" value="NAD(P)-bd_dom_sf"/>
</dbReference>
<dbReference type="PANTHER" id="PTHR43593">
    <property type="match status" value="1"/>
</dbReference>
<dbReference type="PANTHER" id="PTHR43593:SF1">
    <property type="entry name" value="INOSITOL 2-DEHYDROGENASE"/>
    <property type="match status" value="1"/>
</dbReference>
<dbReference type="Pfam" id="PF01408">
    <property type="entry name" value="GFO_IDH_MocA"/>
    <property type="match status" value="1"/>
</dbReference>
<dbReference type="Pfam" id="PF02894">
    <property type="entry name" value="GFO_IDH_MocA_C"/>
    <property type="match status" value="1"/>
</dbReference>
<dbReference type="SUPFAM" id="SSF55347">
    <property type="entry name" value="Glyceraldehyde-3-phosphate dehydrogenase-like, C-terminal domain"/>
    <property type="match status" value="1"/>
</dbReference>
<dbReference type="SUPFAM" id="SSF51735">
    <property type="entry name" value="NAD(P)-binding Rossmann-fold domains"/>
    <property type="match status" value="1"/>
</dbReference>
<comment type="function">
    <text evidence="1">Involved in the oxidation of myo-inositol (MI) to 2-keto-myo-inositol (2KMI or 2-inosose).</text>
</comment>
<comment type="catalytic activity">
    <reaction evidence="1">
        <text>myo-inositol + NAD(+) = scyllo-inosose + NADH + H(+)</text>
        <dbReference type="Rhea" id="RHEA:16949"/>
        <dbReference type="ChEBI" id="CHEBI:15378"/>
        <dbReference type="ChEBI" id="CHEBI:17268"/>
        <dbReference type="ChEBI" id="CHEBI:17811"/>
        <dbReference type="ChEBI" id="CHEBI:57540"/>
        <dbReference type="ChEBI" id="CHEBI:57945"/>
        <dbReference type="EC" id="1.1.1.18"/>
    </reaction>
</comment>
<comment type="subunit">
    <text evidence="1">Homotetramer.</text>
</comment>
<comment type="similarity">
    <text evidence="1">Belongs to the Gfo/Idh/MocA family.</text>
</comment>
<keyword id="KW-0520">NAD</keyword>
<keyword id="KW-0560">Oxidoreductase</keyword>
<proteinExistence type="inferred from homology"/>
<feature type="chain" id="PRO_1000187316" description="Inositol 2-dehydrogenase">
    <location>
        <begin position="1"/>
        <end position="337"/>
    </location>
</feature>
<organism>
    <name type="scientific">Pseudarthrobacter chlorophenolicus (strain ATCC 700700 / DSM 12829 / CIP 107037 / JCM 12360 / KCTC 9906 / NCIMB 13794 / A6)</name>
    <name type="common">Arthrobacter chlorophenolicus</name>
    <dbReference type="NCBI Taxonomy" id="452863"/>
    <lineage>
        <taxon>Bacteria</taxon>
        <taxon>Bacillati</taxon>
        <taxon>Actinomycetota</taxon>
        <taxon>Actinomycetes</taxon>
        <taxon>Micrococcales</taxon>
        <taxon>Micrococcaceae</taxon>
        <taxon>Pseudarthrobacter</taxon>
    </lineage>
</organism>
<protein>
    <recommendedName>
        <fullName evidence="1">Inositol 2-dehydrogenase</fullName>
        <ecNumber evidence="1">1.1.1.18</ecNumber>
    </recommendedName>
    <alternativeName>
        <fullName evidence="1">Myo-inositol 2-dehydrogenase</fullName>
        <shortName evidence="1">MI 2-dehydrogenase</shortName>
    </alternativeName>
</protein>
<gene>
    <name evidence="1" type="primary">iolG</name>
    <name type="ordered locus">Achl_0942</name>
</gene>
<name>IOLG_PSECP</name>
<sequence>MTETLRVAVIGAGRMGADHIQRLHQRIHGAEVAAVVDVDLARAQAAIEGIPGAVALADAEEALNNGDVNAVLIATPGFLHEDILLKAIAKDIPILCEKPLTPDAESSLKIVEAEVALGRKRIQVGFMRRFDAEYAALGSIIRNQELGELLMLHHQHRNPTTPAGFTNEMLINDSVVHEFDAIRFFTGEEITSVQVRLGKVTKNAPAGQHDPQHVLIETESGVLADVEIYVNAKFGYEVATQASFEDGIVSIGGDKGPYTRSAGRWGGNVTPGFEERFGAAYDVEIQSWVDAALRGEIGGPSAWDGYATAACCEAGVEAQKNGEKVAVKLAAKPDLYS</sequence>
<reference key="1">
    <citation type="submission" date="2009-01" db="EMBL/GenBank/DDBJ databases">
        <title>Complete sequence of chromosome of Arthrobacter chlorophenolicus A6.</title>
        <authorList>
            <consortium name="US DOE Joint Genome Institute"/>
            <person name="Lucas S."/>
            <person name="Copeland A."/>
            <person name="Lapidus A."/>
            <person name="Glavina del Rio T."/>
            <person name="Tice H."/>
            <person name="Bruce D."/>
            <person name="Goodwin L."/>
            <person name="Pitluck S."/>
            <person name="Goltsman E."/>
            <person name="Clum A."/>
            <person name="Larimer F."/>
            <person name="Land M."/>
            <person name="Hauser L."/>
            <person name="Kyrpides N."/>
            <person name="Mikhailova N."/>
            <person name="Jansson J."/>
            <person name="Richardson P."/>
        </authorList>
    </citation>
    <scope>NUCLEOTIDE SEQUENCE [LARGE SCALE GENOMIC DNA]</scope>
    <source>
        <strain>ATCC 700700 / DSM 12829 / CIP 107037 / JCM 12360 / KCTC 9906 / NCIMB 13794 / A6</strain>
    </source>
</reference>
<accession>B8HDD2</accession>
<evidence type="ECO:0000255" key="1">
    <source>
        <dbReference type="HAMAP-Rule" id="MF_01671"/>
    </source>
</evidence>